<dbReference type="EMBL" id="AE003849">
    <property type="protein sequence ID" value="AAF83758.1"/>
    <property type="molecule type" value="Genomic_DNA"/>
</dbReference>
<dbReference type="PIR" id="G82743">
    <property type="entry name" value="G82743"/>
</dbReference>
<dbReference type="RefSeq" id="WP_010893467.1">
    <property type="nucleotide sequence ID" value="NC_002488.3"/>
</dbReference>
<dbReference type="SMR" id="Q9PET0"/>
<dbReference type="STRING" id="160492.XF_0948"/>
<dbReference type="KEGG" id="xfa:XF_0948"/>
<dbReference type="eggNOG" id="COG1327">
    <property type="taxonomic scope" value="Bacteria"/>
</dbReference>
<dbReference type="HOGENOM" id="CLU_108412_0_0_6"/>
<dbReference type="Proteomes" id="UP000000812">
    <property type="component" value="Chromosome"/>
</dbReference>
<dbReference type="GO" id="GO:0005524">
    <property type="term" value="F:ATP binding"/>
    <property type="evidence" value="ECO:0007669"/>
    <property type="project" value="UniProtKB-KW"/>
</dbReference>
<dbReference type="GO" id="GO:0003677">
    <property type="term" value="F:DNA binding"/>
    <property type="evidence" value="ECO:0007669"/>
    <property type="project" value="UniProtKB-KW"/>
</dbReference>
<dbReference type="GO" id="GO:0008270">
    <property type="term" value="F:zinc ion binding"/>
    <property type="evidence" value="ECO:0007669"/>
    <property type="project" value="UniProtKB-UniRule"/>
</dbReference>
<dbReference type="GO" id="GO:0045892">
    <property type="term" value="P:negative regulation of DNA-templated transcription"/>
    <property type="evidence" value="ECO:0007669"/>
    <property type="project" value="UniProtKB-UniRule"/>
</dbReference>
<dbReference type="HAMAP" id="MF_00440">
    <property type="entry name" value="NrdR"/>
    <property type="match status" value="1"/>
</dbReference>
<dbReference type="InterPro" id="IPR005144">
    <property type="entry name" value="ATP-cone_dom"/>
</dbReference>
<dbReference type="InterPro" id="IPR055173">
    <property type="entry name" value="NrdR-like_N"/>
</dbReference>
<dbReference type="InterPro" id="IPR003796">
    <property type="entry name" value="RNR_NrdR-like"/>
</dbReference>
<dbReference type="NCBIfam" id="TIGR00244">
    <property type="entry name" value="transcriptional regulator NrdR"/>
    <property type="match status" value="1"/>
</dbReference>
<dbReference type="PANTHER" id="PTHR30455">
    <property type="entry name" value="TRANSCRIPTIONAL REPRESSOR NRDR"/>
    <property type="match status" value="1"/>
</dbReference>
<dbReference type="PANTHER" id="PTHR30455:SF2">
    <property type="entry name" value="TRANSCRIPTIONAL REPRESSOR NRDR"/>
    <property type="match status" value="1"/>
</dbReference>
<dbReference type="Pfam" id="PF03477">
    <property type="entry name" value="ATP-cone"/>
    <property type="match status" value="1"/>
</dbReference>
<dbReference type="Pfam" id="PF22811">
    <property type="entry name" value="Zn_ribbon_NrdR"/>
    <property type="match status" value="1"/>
</dbReference>
<dbReference type="PROSITE" id="PS51161">
    <property type="entry name" value="ATP_CONE"/>
    <property type="match status" value="1"/>
</dbReference>
<accession>Q9PET0</accession>
<keyword id="KW-0067">ATP-binding</keyword>
<keyword id="KW-0238">DNA-binding</keyword>
<keyword id="KW-0479">Metal-binding</keyword>
<keyword id="KW-0547">Nucleotide-binding</keyword>
<keyword id="KW-0678">Repressor</keyword>
<keyword id="KW-0804">Transcription</keyword>
<keyword id="KW-0805">Transcription regulation</keyword>
<keyword id="KW-0862">Zinc</keyword>
<keyword id="KW-0863">Zinc-finger</keyword>
<organism>
    <name type="scientific">Xylella fastidiosa (strain 9a5c)</name>
    <dbReference type="NCBI Taxonomy" id="160492"/>
    <lineage>
        <taxon>Bacteria</taxon>
        <taxon>Pseudomonadati</taxon>
        <taxon>Pseudomonadota</taxon>
        <taxon>Gammaproteobacteria</taxon>
        <taxon>Lysobacterales</taxon>
        <taxon>Lysobacteraceae</taxon>
        <taxon>Xylella</taxon>
    </lineage>
</organism>
<reference key="1">
    <citation type="journal article" date="2000" name="Nature">
        <title>The genome sequence of the plant pathogen Xylella fastidiosa.</title>
        <authorList>
            <person name="Simpson A.J.G."/>
            <person name="Reinach F.C."/>
            <person name="Arruda P."/>
            <person name="Abreu F.A."/>
            <person name="Acencio M."/>
            <person name="Alvarenga R."/>
            <person name="Alves L.M.C."/>
            <person name="Araya J.E."/>
            <person name="Baia G.S."/>
            <person name="Baptista C.S."/>
            <person name="Barros M.H."/>
            <person name="Bonaccorsi E.D."/>
            <person name="Bordin S."/>
            <person name="Bove J.M."/>
            <person name="Briones M.R.S."/>
            <person name="Bueno M.R.P."/>
            <person name="Camargo A.A."/>
            <person name="Camargo L.E.A."/>
            <person name="Carraro D.M."/>
            <person name="Carrer H."/>
            <person name="Colauto N.B."/>
            <person name="Colombo C."/>
            <person name="Costa F.F."/>
            <person name="Costa M.C.R."/>
            <person name="Costa-Neto C.M."/>
            <person name="Coutinho L.L."/>
            <person name="Cristofani M."/>
            <person name="Dias-Neto E."/>
            <person name="Docena C."/>
            <person name="El-Dorry H."/>
            <person name="Facincani A.P."/>
            <person name="Ferreira A.J.S."/>
            <person name="Ferreira V.C.A."/>
            <person name="Ferro J.A."/>
            <person name="Fraga J.S."/>
            <person name="Franca S.C."/>
            <person name="Franco M.C."/>
            <person name="Frohme M."/>
            <person name="Furlan L.R."/>
            <person name="Garnier M."/>
            <person name="Goldman G.H."/>
            <person name="Goldman M.H.S."/>
            <person name="Gomes S.L."/>
            <person name="Gruber A."/>
            <person name="Ho P.L."/>
            <person name="Hoheisel J.D."/>
            <person name="Junqueira M.L."/>
            <person name="Kemper E.L."/>
            <person name="Kitajima J.P."/>
            <person name="Krieger J.E."/>
            <person name="Kuramae E.E."/>
            <person name="Laigret F."/>
            <person name="Lambais M.R."/>
            <person name="Leite L.C.C."/>
            <person name="Lemos E.G.M."/>
            <person name="Lemos M.V.F."/>
            <person name="Lopes S.A."/>
            <person name="Lopes C.R."/>
            <person name="Machado J.A."/>
            <person name="Machado M.A."/>
            <person name="Madeira A.M.B.N."/>
            <person name="Madeira H.M.F."/>
            <person name="Marino C.L."/>
            <person name="Marques M.V."/>
            <person name="Martins E.A.L."/>
            <person name="Martins E.M.F."/>
            <person name="Matsukuma A.Y."/>
            <person name="Menck C.F.M."/>
            <person name="Miracca E.C."/>
            <person name="Miyaki C.Y."/>
            <person name="Monteiro-Vitorello C.B."/>
            <person name="Moon D.H."/>
            <person name="Nagai M.A."/>
            <person name="Nascimento A.L.T.O."/>
            <person name="Netto L.E.S."/>
            <person name="Nhani A. Jr."/>
            <person name="Nobrega F.G."/>
            <person name="Nunes L.R."/>
            <person name="Oliveira M.A."/>
            <person name="de Oliveira M.C."/>
            <person name="de Oliveira R.C."/>
            <person name="Palmieri D.A."/>
            <person name="Paris A."/>
            <person name="Peixoto B.R."/>
            <person name="Pereira G.A.G."/>
            <person name="Pereira H.A. Jr."/>
            <person name="Pesquero J.B."/>
            <person name="Quaggio R.B."/>
            <person name="Roberto P.G."/>
            <person name="Rodrigues V."/>
            <person name="de Rosa A.J.M."/>
            <person name="de Rosa V.E. Jr."/>
            <person name="de Sa R.G."/>
            <person name="Santelli R.V."/>
            <person name="Sawasaki H.E."/>
            <person name="da Silva A.C.R."/>
            <person name="da Silva A.M."/>
            <person name="da Silva F.R."/>
            <person name="Silva W.A. Jr."/>
            <person name="da Silveira J.F."/>
            <person name="Silvestri M.L.Z."/>
            <person name="Siqueira W.J."/>
            <person name="de Souza A.A."/>
            <person name="de Souza A.P."/>
            <person name="Terenzi M.F."/>
            <person name="Truffi D."/>
            <person name="Tsai S.M."/>
            <person name="Tsuhako M.H."/>
            <person name="Vallada H."/>
            <person name="Van Sluys M.A."/>
            <person name="Verjovski-Almeida S."/>
            <person name="Vettore A.L."/>
            <person name="Zago M.A."/>
            <person name="Zatz M."/>
            <person name="Meidanis J."/>
            <person name="Setubal J.C."/>
        </authorList>
    </citation>
    <scope>NUCLEOTIDE SEQUENCE [LARGE SCALE GENOMIC DNA]</scope>
    <source>
        <strain>9a5c</strain>
    </source>
</reference>
<protein>
    <recommendedName>
        <fullName evidence="1">Transcriptional repressor NrdR</fullName>
    </recommendedName>
</protein>
<evidence type="ECO:0000255" key="1">
    <source>
        <dbReference type="HAMAP-Rule" id="MF_00440"/>
    </source>
</evidence>
<feature type="chain" id="PRO_0000182383" description="Transcriptional repressor NrdR">
    <location>
        <begin position="1"/>
        <end position="181"/>
    </location>
</feature>
<feature type="domain" description="ATP-cone" evidence="1">
    <location>
        <begin position="49"/>
        <end position="139"/>
    </location>
</feature>
<feature type="zinc finger region" evidence="1">
    <location>
        <begin position="3"/>
        <end position="34"/>
    </location>
</feature>
<name>NRDR_XYLFA</name>
<comment type="function">
    <text evidence="1">Negatively regulates transcription of bacterial ribonucleotide reductase nrd genes and operons by binding to NrdR-boxes.</text>
</comment>
<comment type="cofactor">
    <cofactor evidence="1">
        <name>Zn(2+)</name>
        <dbReference type="ChEBI" id="CHEBI:29105"/>
    </cofactor>
    <text evidence="1">Binds 1 zinc ion.</text>
</comment>
<comment type="similarity">
    <text evidence="1">Belongs to the NrdR family.</text>
</comment>
<sequence length="181" mass="20749">MYCLFCQHTYTRVIDSRVSEDGATIRRRRECEACGERFSTLETIELKLPVIIKKDGGREAFDGRKLRTSFDRALQKRPVAEECIEMALRAVIHRLRMAGEREVPSIVVGEYVMAELRKLDHVGYVRFASVYRSFQDVADFREEIEKLESELLVSREQLPLLEAAMESMGHPSVDQGGKHGV</sequence>
<gene>
    <name evidence="1" type="primary">nrdR</name>
    <name type="ordered locus">XF_0948</name>
</gene>
<proteinExistence type="inferred from homology"/>